<accession>Q964R1</accession>
<protein>
    <recommendedName>
        <fullName>Cytochrome P450 6j1</fullName>
        <ecNumber>1.14.-.-</ecNumber>
    </recommendedName>
    <alternativeName>
        <fullName>CYPVIJ1</fullName>
    </alternativeName>
</protein>
<organism>
    <name type="scientific">Blattella germanica</name>
    <name type="common">German cockroach</name>
    <name type="synonym">Blatta germanica</name>
    <dbReference type="NCBI Taxonomy" id="6973"/>
    <lineage>
        <taxon>Eukaryota</taxon>
        <taxon>Metazoa</taxon>
        <taxon>Ecdysozoa</taxon>
        <taxon>Arthropoda</taxon>
        <taxon>Hexapoda</taxon>
        <taxon>Insecta</taxon>
        <taxon>Pterygota</taxon>
        <taxon>Neoptera</taxon>
        <taxon>Polyneoptera</taxon>
        <taxon>Dictyoptera</taxon>
        <taxon>Blattodea</taxon>
        <taxon>Blaberoidea</taxon>
        <taxon>Blattellidae</taxon>
        <taxon>Blattella</taxon>
    </lineage>
</organism>
<dbReference type="EC" id="1.14.-.-"/>
<dbReference type="EMBL" id="AF281325">
    <property type="protein sequence ID" value="AAK57913.1"/>
    <property type="molecule type" value="mRNA"/>
</dbReference>
<dbReference type="SMR" id="Q964R1"/>
<dbReference type="GO" id="GO:0005789">
    <property type="term" value="C:endoplasmic reticulum membrane"/>
    <property type="evidence" value="ECO:0007669"/>
    <property type="project" value="UniProtKB-SubCell"/>
</dbReference>
<dbReference type="GO" id="GO:0020037">
    <property type="term" value="F:heme binding"/>
    <property type="evidence" value="ECO:0007669"/>
    <property type="project" value="InterPro"/>
</dbReference>
<dbReference type="GO" id="GO:0005506">
    <property type="term" value="F:iron ion binding"/>
    <property type="evidence" value="ECO:0007669"/>
    <property type="project" value="InterPro"/>
</dbReference>
<dbReference type="GO" id="GO:0004497">
    <property type="term" value="F:monooxygenase activity"/>
    <property type="evidence" value="ECO:0007669"/>
    <property type="project" value="UniProtKB-KW"/>
</dbReference>
<dbReference type="GO" id="GO:0016705">
    <property type="term" value="F:oxidoreductase activity, acting on paired donors, with incorporation or reduction of molecular oxygen"/>
    <property type="evidence" value="ECO:0007669"/>
    <property type="project" value="InterPro"/>
</dbReference>
<dbReference type="CDD" id="cd11056">
    <property type="entry name" value="CYP6-like"/>
    <property type="match status" value="1"/>
</dbReference>
<dbReference type="FunFam" id="1.10.630.10:FF:000042">
    <property type="entry name" value="Cytochrome P450"/>
    <property type="match status" value="1"/>
</dbReference>
<dbReference type="Gene3D" id="1.10.630.10">
    <property type="entry name" value="Cytochrome P450"/>
    <property type="match status" value="1"/>
</dbReference>
<dbReference type="InterPro" id="IPR001128">
    <property type="entry name" value="Cyt_P450"/>
</dbReference>
<dbReference type="InterPro" id="IPR017972">
    <property type="entry name" value="Cyt_P450_CS"/>
</dbReference>
<dbReference type="InterPro" id="IPR002402">
    <property type="entry name" value="Cyt_P450_E_grp-II"/>
</dbReference>
<dbReference type="InterPro" id="IPR036396">
    <property type="entry name" value="Cyt_P450_sf"/>
</dbReference>
<dbReference type="InterPro" id="IPR050476">
    <property type="entry name" value="Insect_CytP450_Detox"/>
</dbReference>
<dbReference type="PANTHER" id="PTHR24292:SF54">
    <property type="entry name" value="CYP9F3-RELATED"/>
    <property type="match status" value="1"/>
</dbReference>
<dbReference type="PANTHER" id="PTHR24292">
    <property type="entry name" value="CYTOCHROME P450"/>
    <property type="match status" value="1"/>
</dbReference>
<dbReference type="Pfam" id="PF00067">
    <property type="entry name" value="p450"/>
    <property type="match status" value="1"/>
</dbReference>
<dbReference type="PRINTS" id="PR00464">
    <property type="entry name" value="EP450II"/>
</dbReference>
<dbReference type="PRINTS" id="PR00385">
    <property type="entry name" value="P450"/>
</dbReference>
<dbReference type="SUPFAM" id="SSF48264">
    <property type="entry name" value="Cytochrome P450"/>
    <property type="match status" value="1"/>
</dbReference>
<dbReference type="PROSITE" id="PS00086">
    <property type="entry name" value="CYTOCHROME_P450"/>
    <property type="match status" value="1"/>
</dbReference>
<reference key="1">
    <citation type="journal article" date="2001" name="Insect Mol. Biol.">
        <title>Cloning of two novel P450 cDNAs from German cockroaches, Blattella germanica (L.): CYP6K1 and CYP6J1.</title>
        <authorList>
            <person name="Wen Z."/>
            <person name="Scott J.G."/>
        </authorList>
    </citation>
    <scope>NUCLEOTIDE SEQUENCE [MRNA]</scope>
</reference>
<keyword id="KW-0256">Endoplasmic reticulum</keyword>
<keyword id="KW-0349">Heme</keyword>
<keyword id="KW-0408">Iron</keyword>
<keyword id="KW-0472">Membrane</keyword>
<keyword id="KW-0479">Metal-binding</keyword>
<keyword id="KW-0492">Microsome</keyword>
<keyword id="KW-0503">Monooxygenase</keyword>
<keyword id="KW-0560">Oxidoreductase</keyword>
<evidence type="ECO:0000250" key="1"/>
<evidence type="ECO:0000305" key="2"/>
<comment type="cofactor">
    <cofactor evidence="1">
        <name>heme</name>
        <dbReference type="ChEBI" id="CHEBI:30413"/>
    </cofactor>
</comment>
<comment type="subcellular location">
    <subcellularLocation>
        <location evidence="2">Endoplasmic reticulum membrane</location>
        <topology evidence="2">Peripheral membrane protein</topology>
    </subcellularLocation>
    <subcellularLocation>
        <location evidence="2">Microsome membrane</location>
        <topology evidence="2">Peripheral membrane protein</topology>
    </subcellularLocation>
</comment>
<comment type="similarity">
    <text evidence="2">Belongs to the cytochrome P450 family.</text>
</comment>
<gene>
    <name type="primary">CYP6J1</name>
</gene>
<name>CP6J1_BLAGE</name>
<proteinExistence type="evidence at transcript level"/>
<feature type="chain" id="PRO_0000051885" description="Cytochrome P450 6j1">
    <location>
        <begin position="1"/>
        <end position="501"/>
    </location>
</feature>
<feature type="binding site" description="axial binding residue" evidence="1">
    <location>
        <position position="444"/>
    </location>
    <ligand>
        <name>heme</name>
        <dbReference type="ChEBI" id="CHEBI:30413"/>
    </ligand>
    <ligandPart>
        <name>Fe</name>
        <dbReference type="ChEBI" id="CHEBI:18248"/>
    </ligandPart>
</feature>
<sequence>MFEFGSIIVTVIAVFITIPICLYLFLTRHFNFWKKRGVIYVRPLPFFGNLKDVLLQKKYIGYYLKDIYEENINKPYVGIFAFDQPALLVNDLEIVKNILVKDSRNFIDRMVKVDESLSPLNANAIFALRGQKWKHVRTSLTPTFTTGKMKNMFYLVDKCGQQLVLFIEKFAKAENPVAVKDAVERFTMDVTAMCAFGIECNSLQDPKAEFSNLLHRIFQLSFTSAVANLATFFAPWVQNFFRLKLMDSEIEDRIRDIVWRAVHLREKTGEKRNDLLDYLMELRTSETSKLDGDDFVAQAFGFLVAGFHTSSMTLTFALYELSVHQDIQTTARTEIKDVLEHHKKKVTYYSIKDMKYLDMVVNETLRKYPAIPFLDRRCQEDYPLTQDLMLPAGTGVYIPVYALHHDSKYFPSPAKFDPERFSEKNKQNIPHFAYMPFGEGPRNCIGMRFGSMQVKAALIHILSNFEVSPCKETRIPLIIDPKPFNLMALGGVYLNITKFNN</sequence>